<organism>
    <name type="scientific">Komagataella pastoris</name>
    <name type="common">Yeast</name>
    <name type="synonym">Pichia pastoris</name>
    <dbReference type="NCBI Taxonomy" id="4922"/>
    <lineage>
        <taxon>Eukaryota</taxon>
        <taxon>Fungi</taxon>
        <taxon>Dikarya</taxon>
        <taxon>Ascomycota</taxon>
        <taxon>Saccharomycotina</taxon>
        <taxon>Pichiomycetes</taxon>
        <taxon>Pichiales</taxon>
        <taxon>Pichiaceae</taxon>
        <taxon>Komagataella</taxon>
    </lineage>
</organism>
<accession>O13504</accession>
<proteinExistence type="inferred from homology"/>
<gene>
    <name type="primary">TRP1</name>
</gene>
<keyword id="KW-0028">Amino-acid biosynthesis</keyword>
<keyword id="KW-0057">Aromatic amino acid biosynthesis</keyword>
<keyword id="KW-0413">Isomerase</keyword>
<keyword id="KW-0822">Tryptophan biosynthesis</keyword>
<name>TRPF_PICPA</name>
<protein>
    <recommendedName>
        <fullName>N-(5'-phosphoribosyl)anthranilate isomerase</fullName>
        <shortName>PRAI</shortName>
        <ecNumber>5.3.1.24</ecNumber>
    </recommendedName>
</protein>
<sequence>MALVKICGLQSLEAAETAVNNGASLVGVIMVPGRERTVKQEVAREISQMVREKRISKGSKYLDSRQLRKEWDDCPLEDWFEYNVKEINSSGPFLVGVFRNQSIDEIQQAIHTHGLDFVQLHGSEDFDSYIRNIPVPVITRYTDNAVDGLTGEDLAINRALVLLDSEQGGEGKTIDWARAQKFGERRGKYLLAGGVTPDNVAHARSHTGCIGVDVSGGVETNASKDMDKITQFIRNAT</sequence>
<reference key="1">
    <citation type="journal article" date="1998" name="Yeast">
        <title>Cloning and sequence analysis of the Pichia pastoris TRP1, IPP1 and HIS3 genes.</title>
        <authorList>
            <person name="Cosano I.C."/>
            <person name="Alvarez P."/>
            <person name="Molina M."/>
            <person name="Nombela C."/>
        </authorList>
    </citation>
    <scope>NUCLEOTIDE SEQUENCE [GENOMIC DNA]</scope>
    <source>
        <strain>ATCC 76273 / CBS 7435 / CECT 11407 / NRRL Y-11430</strain>
    </source>
</reference>
<dbReference type="EC" id="5.3.1.24"/>
<dbReference type="EMBL" id="AJ001000">
    <property type="protein sequence ID" value="CAA04452.1"/>
    <property type="molecule type" value="Genomic_DNA"/>
</dbReference>
<dbReference type="SMR" id="O13504"/>
<dbReference type="UniPathway" id="UPA00035">
    <property type="reaction ID" value="UER00042"/>
</dbReference>
<dbReference type="GO" id="GO:0004640">
    <property type="term" value="F:phosphoribosylanthranilate isomerase activity"/>
    <property type="evidence" value="ECO:0007669"/>
    <property type="project" value="UniProtKB-EC"/>
</dbReference>
<dbReference type="GO" id="GO:0000162">
    <property type="term" value="P:L-tryptophan biosynthetic process"/>
    <property type="evidence" value="ECO:0007669"/>
    <property type="project" value="UniProtKB-UniPathway"/>
</dbReference>
<dbReference type="CDD" id="cd00405">
    <property type="entry name" value="PRAI"/>
    <property type="match status" value="1"/>
</dbReference>
<dbReference type="Gene3D" id="3.20.20.70">
    <property type="entry name" value="Aldolase class I"/>
    <property type="match status" value="1"/>
</dbReference>
<dbReference type="HAMAP" id="MF_00135">
    <property type="entry name" value="PRAI"/>
    <property type="match status" value="1"/>
</dbReference>
<dbReference type="InterPro" id="IPR013785">
    <property type="entry name" value="Aldolase_TIM"/>
</dbReference>
<dbReference type="InterPro" id="IPR001240">
    <property type="entry name" value="PRAI_dom"/>
</dbReference>
<dbReference type="InterPro" id="IPR011060">
    <property type="entry name" value="RibuloseP-bd_barrel"/>
</dbReference>
<dbReference type="InterPro" id="IPR044643">
    <property type="entry name" value="TrpF_fam"/>
</dbReference>
<dbReference type="PANTHER" id="PTHR42894">
    <property type="entry name" value="N-(5'-PHOSPHORIBOSYL)ANTHRANILATE ISOMERASE"/>
    <property type="match status" value="1"/>
</dbReference>
<dbReference type="PANTHER" id="PTHR42894:SF1">
    <property type="entry name" value="N-(5'-PHOSPHORIBOSYL)ANTHRANILATE ISOMERASE"/>
    <property type="match status" value="1"/>
</dbReference>
<dbReference type="Pfam" id="PF00697">
    <property type="entry name" value="PRAI"/>
    <property type="match status" value="1"/>
</dbReference>
<dbReference type="SUPFAM" id="SSF51366">
    <property type="entry name" value="Ribulose-phoshate binding barrel"/>
    <property type="match status" value="1"/>
</dbReference>
<comment type="catalytic activity">
    <reaction>
        <text>N-(5-phospho-beta-D-ribosyl)anthranilate = 1-(2-carboxyphenylamino)-1-deoxy-D-ribulose 5-phosphate</text>
        <dbReference type="Rhea" id="RHEA:21540"/>
        <dbReference type="ChEBI" id="CHEBI:18277"/>
        <dbReference type="ChEBI" id="CHEBI:58613"/>
        <dbReference type="EC" id="5.3.1.24"/>
    </reaction>
</comment>
<comment type="pathway">
    <text>Amino-acid biosynthesis; L-tryptophan biosynthesis; L-tryptophan from chorismate: step 3/5.</text>
</comment>
<comment type="similarity">
    <text evidence="1">Belongs to the TrpF family.</text>
</comment>
<feature type="chain" id="PRO_0000154335" description="N-(5'-phosphoribosyl)anthranilate isomerase">
    <location>
        <begin position="1"/>
        <end position="237"/>
    </location>
</feature>
<evidence type="ECO:0000305" key="1"/>